<protein>
    <recommendedName>
        <fullName>Heat shock cognate 70 kDa protein 4</fullName>
        <shortName>HSC70-4</shortName>
    </recommendedName>
</protein>
<gene>
    <name type="ORF">DDB_G0293678</name>
</gene>
<feature type="chain" id="PRO_0000327973" description="Heat shock cognate 70 kDa protein 4">
    <location>
        <begin position="1"/>
        <end position="569"/>
    </location>
</feature>
<reference key="1">
    <citation type="journal article" date="2005" name="Nature">
        <title>The genome of the social amoeba Dictyostelium discoideum.</title>
        <authorList>
            <person name="Eichinger L."/>
            <person name="Pachebat J.A."/>
            <person name="Gloeckner G."/>
            <person name="Rajandream M.A."/>
            <person name="Sucgang R."/>
            <person name="Berriman M."/>
            <person name="Song J."/>
            <person name="Olsen R."/>
            <person name="Szafranski K."/>
            <person name="Xu Q."/>
            <person name="Tunggal B."/>
            <person name="Kummerfeld S."/>
            <person name="Madera M."/>
            <person name="Konfortov B.A."/>
            <person name="Rivero F."/>
            <person name="Bankier A.T."/>
            <person name="Lehmann R."/>
            <person name="Hamlin N."/>
            <person name="Davies R."/>
            <person name="Gaudet P."/>
            <person name="Fey P."/>
            <person name="Pilcher K."/>
            <person name="Chen G."/>
            <person name="Saunders D."/>
            <person name="Sodergren E.J."/>
            <person name="Davis P."/>
            <person name="Kerhornou A."/>
            <person name="Nie X."/>
            <person name="Hall N."/>
            <person name="Anjard C."/>
            <person name="Hemphill L."/>
            <person name="Bason N."/>
            <person name="Farbrother P."/>
            <person name="Desany B."/>
            <person name="Just E."/>
            <person name="Morio T."/>
            <person name="Rost R."/>
            <person name="Churcher C.M."/>
            <person name="Cooper J."/>
            <person name="Haydock S."/>
            <person name="van Driessche N."/>
            <person name="Cronin A."/>
            <person name="Goodhead I."/>
            <person name="Muzny D.M."/>
            <person name="Mourier T."/>
            <person name="Pain A."/>
            <person name="Lu M."/>
            <person name="Harper D."/>
            <person name="Lindsay R."/>
            <person name="Hauser H."/>
            <person name="James K.D."/>
            <person name="Quiles M."/>
            <person name="Madan Babu M."/>
            <person name="Saito T."/>
            <person name="Buchrieser C."/>
            <person name="Wardroper A."/>
            <person name="Felder M."/>
            <person name="Thangavelu M."/>
            <person name="Johnson D."/>
            <person name="Knights A."/>
            <person name="Loulseged H."/>
            <person name="Mungall K.L."/>
            <person name="Oliver K."/>
            <person name="Price C."/>
            <person name="Quail M.A."/>
            <person name="Urushihara H."/>
            <person name="Hernandez J."/>
            <person name="Rabbinowitsch E."/>
            <person name="Steffen D."/>
            <person name="Sanders M."/>
            <person name="Ma J."/>
            <person name="Kohara Y."/>
            <person name="Sharp S."/>
            <person name="Simmonds M.N."/>
            <person name="Spiegler S."/>
            <person name="Tivey A."/>
            <person name="Sugano S."/>
            <person name="White B."/>
            <person name="Walker D."/>
            <person name="Woodward J.R."/>
            <person name="Winckler T."/>
            <person name="Tanaka Y."/>
            <person name="Shaulsky G."/>
            <person name="Schleicher M."/>
            <person name="Weinstock G.M."/>
            <person name="Rosenthal A."/>
            <person name="Cox E.C."/>
            <person name="Chisholm R.L."/>
            <person name="Gibbs R.A."/>
            <person name="Loomis W.F."/>
            <person name="Platzer M."/>
            <person name="Kay R.R."/>
            <person name="Williams J.G."/>
            <person name="Dear P.H."/>
            <person name="Noegel A.A."/>
            <person name="Barrell B.G."/>
            <person name="Kuspa A."/>
        </authorList>
    </citation>
    <scope>NUCLEOTIDE SEQUENCE [LARGE SCALE GENOMIC DNA]</scope>
    <source>
        <strain>AX4</strain>
    </source>
</reference>
<dbReference type="EMBL" id="AAFI02000218">
    <property type="protein sequence ID" value="EAL60651.1"/>
    <property type="molecule type" value="Genomic_DNA"/>
</dbReference>
<dbReference type="RefSeq" id="XP_629091.1">
    <property type="nucleotide sequence ID" value="XM_629089.1"/>
</dbReference>
<dbReference type="SMR" id="Q54BD8"/>
<dbReference type="FunCoup" id="Q54BD8">
    <property type="interactions" value="168"/>
</dbReference>
<dbReference type="STRING" id="44689.Q54BD8"/>
<dbReference type="PaxDb" id="44689-DDB0192088"/>
<dbReference type="EnsemblProtists" id="EAL60651">
    <property type="protein sequence ID" value="EAL60651"/>
    <property type="gene ID" value="DDB_G0293678"/>
</dbReference>
<dbReference type="GeneID" id="8629384"/>
<dbReference type="KEGG" id="ddi:DDB_G0293678"/>
<dbReference type="dictyBase" id="DDB_G0293678"/>
<dbReference type="VEuPathDB" id="AmoebaDB:DDB_G0293678"/>
<dbReference type="eggNOG" id="KOG0101">
    <property type="taxonomic scope" value="Eukaryota"/>
</dbReference>
<dbReference type="HOGENOM" id="CLU_005965_0_1_1"/>
<dbReference type="InParanoid" id="Q54BD8"/>
<dbReference type="PhylomeDB" id="Q54BD8"/>
<dbReference type="Reactome" id="R-DDI-3371453">
    <property type="pathway name" value="Regulation of HSF1-mediated heat shock response"/>
</dbReference>
<dbReference type="Reactome" id="R-DDI-3371497">
    <property type="pathway name" value="HSP90 chaperone cycle for steroid hormone receptors (SHR) in the presence of ligand"/>
</dbReference>
<dbReference type="Reactome" id="R-DDI-3371571">
    <property type="pathway name" value="HSF1-dependent transactivation"/>
</dbReference>
<dbReference type="Reactome" id="R-DDI-450408">
    <property type="pathway name" value="AUF1 (hnRNP D0) binds and destabilizes mRNA"/>
</dbReference>
<dbReference type="Reactome" id="R-DDI-6798695">
    <property type="pathway name" value="Neutrophil degranulation"/>
</dbReference>
<dbReference type="Reactome" id="R-DDI-9841251">
    <property type="pathway name" value="Mitochondrial unfolded protein response (UPRmt)"/>
</dbReference>
<dbReference type="PRO" id="PR:Q54BD8"/>
<dbReference type="Proteomes" id="UP000002195">
    <property type="component" value="Chromosome 6"/>
</dbReference>
<dbReference type="GO" id="GO:0005737">
    <property type="term" value="C:cytoplasm"/>
    <property type="evidence" value="ECO:0000318"/>
    <property type="project" value="GO_Central"/>
</dbReference>
<dbReference type="GO" id="GO:0005524">
    <property type="term" value="F:ATP binding"/>
    <property type="evidence" value="ECO:0007669"/>
    <property type="project" value="UniProtKB-KW"/>
</dbReference>
<dbReference type="GO" id="GO:0016887">
    <property type="term" value="F:ATP hydrolysis activity"/>
    <property type="evidence" value="ECO:0000318"/>
    <property type="project" value="GO_Central"/>
</dbReference>
<dbReference type="GO" id="GO:0140662">
    <property type="term" value="F:ATP-dependent protein folding chaperone"/>
    <property type="evidence" value="ECO:0007669"/>
    <property type="project" value="InterPro"/>
</dbReference>
<dbReference type="GO" id="GO:0031072">
    <property type="term" value="F:heat shock protein binding"/>
    <property type="evidence" value="ECO:0000318"/>
    <property type="project" value="GO_Central"/>
</dbReference>
<dbReference type="GO" id="GO:0044183">
    <property type="term" value="F:protein folding chaperone"/>
    <property type="evidence" value="ECO:0000318"/>
    <property type="project" value="GO_Central"/>
</dbReference>
<dbReference type="GO" id="GO:0051085">
    <property type="term" value="P:chaperone cofactor-dependent protein refolding"/>
    <property type="evidence" value="ECO:0000318"/>
    <property type="project" value="GO_Central"/>
</dbReference>
<dbReference type="GO" id="GO:0042026">
    <property type="term" value="P:protein refolding"/>
    <property type="evidence" value="ECO:0000318"/>
    <property type="project" value="GO_Central"/>
</dbReference>
<dbReference type="FunFam" id="2.60.34.10:FF:000023">
    <property type="entry name" value="70 kDa heat shock cognate protein"/>
    <property type="match status" value="1"/>
</dbReference>
<dbReference type="FunFam" id="3.30.30.30:FF:000001">
    <property type="entry name" value="heat shock 70 kDa protein-like"/>
    <property type="match status" value="1"/>
</dbReference>
<dbReference type="FunFam" id="3.90.640.10:FF:000134">
    <property type="entry name" value="Heat shock cognate 71 kDa protein"/>
    <property type="match status" value="1"/>
</dbReference>
<dbReference type="FunFam" id="3.30.420.40:FF:000026">
    <property type="entry name" value="Heat shock protein 70"/>
    <property type="match status" value="1"/>
</dbReference>
<dbReference type="Gene3D" id="3.30.30.30">
    <property type="match status" value="1"/>
</dbReference>
<dbReference type="Gene3D" id="3.30.420.40">
    <property type="match status" value="2"/>
</dbReference>
<dbReference type="Gene3D" id="3.90.640.10">
    <property type="entry name" value="Actin, Chain A, domain 4"/>
    <property type="match status" value="1"/>
</dbReference>
<dbReference type="Gene3D" id="2.60.34.10">
    <property type="entry name" value="Substrate Binding Domain Of DNAk, Chain A, domain 1"/>
    <property type="match status" value="1"/>
</dbReference>
<dbReference type="InterPro" id="IPR043129">
    <property type="entry name" value="ATPase_NBD"/>
</dbReference>
<dbReference type="InterPro" id="IPR018181">
    <property type="entry name" value="Heat_shock_70_CS"/>
</dbReference>
<dbReference type="InterPro" id="IPR029047">
    <property type="entry name" value="HSP70_peptide-bd_sf"/>
</dbReference>
<dbReference type="InterPro" id="IPR013126">
    <property type="entry name" value="Hsp_70_fam"/>
</dbReference>
<dbReference type="PANTHER" id="PTHR19375">
    <property type="entry name" value="HEAT SHOCK PROTEIN 70KDA"/>
    <property type="match status" value="1"/>
</dbReference>
<dbReference type="Pfam" id="PF00012">
    <property type="entry name" value="HSP70"/>
    <property type="match status" value="1"/>
</dbReference>
<dbReference type="PRINTS" id="PR00301">
    <property type="entry name" value="HEATSHOCK70"/>
</dbReference>
<dbReference type="SUPFAM" id="SSF53067">
    <property type="entry name" value="Actin-like ATPase domain"/>
    <property type="match status" value="2"/>
</dbReference>
<dbReference type="SUPFAM" id="SSF100920">
    <property type="entry name" value="Heat shock protein 70kD (HSP70), peptide-binding domain"/>
    <property type="match status" value="1"/>
</dbReference>
<dbReference type="PROSITE" id="PS00297">
    <property type="entry name" value="HSP70_1"/>
    <property type="match status" value="1"/>
</dbReference>
<dbReference type="PROSITE" id="PS00329">
    <property type="entry name" value="HSP70_2"/>
    <property type="match status" value="1"/>
</dbReference>
<dbReference type="PROSITE" id="PS01036">
    <property type="entry name" value="HSP70_3"/>
    <property type="match status" value="1"/>
</dbReference>
<evidence type="ECO:0000250" key="1"/>
<evidence type="ECO:0000305" key="2"/>
<keyword id="KW-0067">ATP-binding</keyword>
<keyword id="KW-0143">Chaperone</keyword>
<keyword id="KW-0547">Nucleotide-binding</keyword>
<keyword id="KW-1185">Reference proteome</keyword>
<name>HS7C4_DICDI</name>
<sequence length="569" mass="63808">MPSMGIDLGTTYSCVGVCNEKGRIEIIANDQGNRTTPSYVSFNNRECLIGDDAMNQVAMNPVNTIFDVKRLFGRKYSDSVVQSDMKLWPFKVIANKFDDKPLIQVDFKGETKTFSPEEISSMVLSKMKEIVEQHLGEPVTDAVITVPAYFNDRQRHATKYAGTISNLNVLRIINEPTATAIAYGLHRRGIDDMKVLIIDLGGGTFDVSLFNIEDGIYEILLSGGDNHLGGADFNNRLMNHFIDEFKLKHKKDITNNQRAIFRLRTACERAKRTLSISSLASIEIDSLYDGIDFYSTITRTHFEKLCSDLFHSCIDHVETILNKCKLDKSLVDEIVLAGGSTQIPKIQRMFKEYFNGKEFNNSINPDEVVAYGAAVQSGVISGKGSNFPQLIFLNVTPLSMGIETVGGIMTNLVERNTHIPIKKTQTFSTQYDNQTNVLIQIYEGERTMTKDNNLIGTFELNGIPPAPRGVTQIEVCFDVDIDGILTVSAEDKTTKKVQKITISNINDHLSKVEIEKMIVDGEKFKQQDQQQKKELIESNYKIYCGDENTLDFEITQKLLGSAQSTEMNE</sequence>
<comment type="function">
    <text evidence="1">May function in protein folding and assembly, and disassembly of protein complexes.</text>
</comment>
<comment type="similarity">
    <text evidence="2">Belongs to the heat shock protein 70 family.</text>
</comment>
<organism>
    <name type="scientific">Dictyostelium discoideum</name>
    <name type="common">Social amoeba</name>
    <dbReference type="NCBI Taxonomy" id="44689"/>
    <lineage>
        <taxon>Eukaryota</taxon>
        <taxon>Amoebozoa</taxon>
        <taxon>Evosea</taxon>
        <taxon>Eumycetozoa</taxon>
        <taxon>Dictyostelia</taxon>
        <taxon>Dictyosteliales</taxon>
        <taxon>Dictyosteliaceae</taxon>
        <taxon>Dictyostelium</taxon>
    </lineage>
</organism>
<proteinExistence type="inferred from homology"/>
<accession>Q54BD8</accession>